<sequence>MSEAIIAKKAEQVELIAEKMKAAASIVVVDSRGLTVDQDTVLRRSLRESGVEFKVIKNSILTRAAEKAGLDELKDVFVGPSAVAFSNEDVIAPAKVINDFTKTADALEIKGGAIEGAVSSKEEIQALATLPNRQGMLSMLLSVLQAPVRNVAYAVKAVAENKEGAA</sequence>
<dbReference type="EMBL" id="AE009949">
    <property type="protein sequence ID" value="AAL97677.1"/>
    <property type="molecule type" value="Genomic_DNA"/>
</dbReference>
<dbReference type="RefSeq" id="WP_011017733.1">
    <property type="nucleotide sequence ID" value="NC_003485.1"/>
</dbReference>
<dbReference type="SMR" id="Q8P159"/>
<dbReference type="KEGG" id="spm:spyM18_1048"/>
<dbReference type="HOGENOM" id="CLU_092227_2_0_9"/>
<dbReference type="GO" id="GO:0015934">
    <property type="term" value="C:large ribosomal subunit"/>
    <property type="evidence" value="ECO:0007669"/>
    <property type="project" value="InterPro"/>
</dbReference>
<dbReference type="GO" id="GO:0070180">
    <property type="term" value="F:large ribosomal subunit rRNA binding"/>
    <property type="evidence" value="ECO:0007669"/>
    <property type="project" value="UniProtKB-UniRule"/>
</dbReference>
<dbReference type="GO" id="GO:0003735">
    <property type="term" value="F:structural constituent of ribosome"/>
    <property type="evidence" value="ECO:0007669"/>
    <property type="project" value="InterPro"/>
</dbReference>
<dbReference type="GO" id="GO:0006412">
    <property type="term" value="P:translation"/>
    <property type="evidence" value="ECO:0007669"/>
    <property type="project" value="UniProtKB-UniRule"/>
</dbReference>
<dbReference type="CDD" id="cd05797">
    <property type="entry name" value="Ribosomal_L10"/>
    <property type="match status" value="1"/>
</dbReference>
<dbReference type="FunFam" id="3.30.70.1730:FF:000001">
    <property type="entry name" value="50S ribosomal protein L10"/>
    <property type="match status" value="1"/>
</dbReference>
<dbReference type="Gene3D" id="3.30.70.1730">
    <property type="match status" value="1"/>
</dbReference>
<dbReference type="HAMAP" id="MF_00362">
    <property type="entry name" value="Ribosomal_uL10"/>
    <property type="match status" value="1"/>
</dbReference>
<dbReference type="InterPro" id="IPR001790">
    <property type="entry name" value="Ribosomal_uL10"/>
</dbReference>
<dbReference type="InterPro" id="IPR043141">
    <property type="entry name" value="Ribosomal_uL10-like_sf"/>
</dbReference>
<dbReference type="InterPro" id="IPR022973">
    <property type="entry name" value="Ribosomal_uL10_bac"/>
</dbReference>
<dbReference type="InterPro" id="IPR047865">
    <property type="entry name" value="Ribosomal_uL10_bac_type"/>
</dbReference>
<dbReference type="InterPro" id="IPR002363">
    <property type="entry name" value="Ribosomal_uL10_CS_bac"/>
</dbReference>
<dbReference type="NCBIfam" id="NF000955">
    <property type="entry name" value="PRK00099.1-1"/>
    <property type="match status" value="1"/>
</dbReference>
<dbReference type="PANTHER" id="PTHR11560">
    <property type="entry name" value="39S RIBOSOMAL PROTEIN L10, MITOCHONDRIAL"/>
    <property type="match status" value="1"/>
</dbReference>
<dbReference type="Pfam" id="PF00466">
    <property type="entry name" value="Ribosomal_L10"/>
    <property type="match status" value="1"/>
</dbReference>
<dbReference type="SUPFAM" id="SSF160369">
    <property type="entry name" value="Ribosomal protein L10-like"/>
    <property type="match status" value="1"/>
</dbReference>
<dbReference type="PROSITE" id="PS01109">
    <property type="entry name" value="RIBOSOMAL_L10"/>
    <property type="match status" value="1"/>
</dbReference>
<accession>Q8P159</accession>
<name>RL10_STRP8</name>
<keyword id="KW-0687">Ribonucleoprotein</keyword>
<keyword id="KW-0689">Ribosomal protein</keyword>
<keyword id="KW-0694">RNA-binding</keyword>
<keyword id="KW-0699">rRNA-binding</keyword>
<reference key="1">
    <citation type="journal article" date="2002" name="Proc. Natl. Acad. Sci. U.S.A.">
        <title>Genome sequence and comparative microarray analysis of serotype M18 group A Streptococcus strains associated with acute rheumatic fever outbreaks.</title>
        <authorList>
            <person name="Smoot J.C."/>
            <person name="Barbian K.D."/>
            <person name="Van Gompel J.J."/>
            <person name="Smoot L.M."/>
            <person name="Chaussee M.S."/>
            <person name="Sylva G.L."/>
            <person name="Sturdevant D.E."/>
            <person name="Ricklefs S.M."/>
            <person name="Porcella S.F."/>
            <person name="Parkins L.D."/>
            <person name="Beres S.B."/>
            <person name="Campbell D.S."/>
            <person name="Smith T.M."/>
            <person name="Zhang Q."/>
            <person name="Kapur V."/>
            <person name="Daly J.A."/>
            <person name="Veasy L.G."/>
            <person name="Musser J.M."/>
        </authorList>
    </citation>
    <scope>NUCLEOTIDE SEQUENCE [LARGE SCALE GENOMIC DNA]</scope>
    <source>
        <strain>MGAS8232</strain>
    </source>
</reference>
<protein>
    <recommendedName>
        <fullName evidence="2">Large ribosomal subunit protein uL10</fullName>
    </recommendedName>
    <alternativeName>
        <fullName>50S ribosomal protein L10</fullName>
    </alternativeName>
</protein>
<organism>
    <name type="scientific">Streptococcus pyogenes serotype M18 (strain MGAS8232)</name>
    <dbReference type="NCBI Taxonomy" id="186103"/>
    <lineage>
        <taxon>Bacteria</taxon>
        <taxon>Bacillati</taxon>
        <taxon>Bacillota</taxon>
        <taxon>Bacilli</taxon>
        <taxon>Lactobacillales</taxon>
        <taxon>Streptococcaceae</taxon>
        <taxon>Streptococcus</taxon>
    </lineage>
</organism>
<comment type="function">
    <text evidence="1">Forms part of the ribosomal stalk, playing a central role in the interaction of the ribosome with GTP-bound translation factors.</text>
</comment>
<comment type="subunit">
    <text evidence="1">Part of the ribosomal stalk of the 50S ribosomal subunit. The N-terminus interacts with L11 and the large rRNA to form the base of the stalk. The C-terminus forms an elongated spine to which L12 dimers bind in a sequential fashion forming a multimeric L10(L12)X complex (By similarity).</text>
</comment>
<comment type="similarity">
    <text evidence="2">Belongs to the universal ribosomal protein uL10 family.</text>
</comment>
<evidence type="ECO:0000250" key="1"/>
<evidence type="ECO:0000305" key="2"/>
<gene>
    <name type="primary">rplJ</name>
    <name type="ordered locus">spyM18_1048</name>
</gene>
<feature type="initiator methionine" description="Removed" evidence="1">
    <location>
        <position position="1"/>
    </location>
</feature>
<feature type="chain" id="PRO_0000154727" description="Large ribosomal subunit protein uL10">
    <location>
        <begin position="2"/>
        <end position="166"/>
    </location>
</feature>
<proteinExistence type="inferred from homology"/>